<accession>Q6EYV9</accession>
<feature type="chain" id="PRO_0000200356" description="Cytochrome b559 subunit beta">
    <location>
        <begin position="1"/>
        <end position="39"/>
    </location>
</feature>
<feature type="transmembrane region" description="Helical" evidence="1">
    <location>
        <begin position="14"/>
        <end position="30"/>
    </location>
</feature>
<feature type="binding site" description="axial binding residue" evidence="1">
    <location>
        <position position="18"/>
    </location>
    <ligand>
        <name>heme</name>
        <dbReference type="ChEBI" id="CHEBI:30413"/>
        <note>ligand shared with alpha subunit</note>
    </ligand>
    <ligandPart>
        <name>Fe</name>
        <dbReference type="ChEBI" id="CHEBI:18248"/>
    </ligandPart>
</feature>
<sequence>MTIDRTYPIFTVRWLAVHGLAVPTVSFLGSISAMQFIQR</sequence>
<comment type="function">
    <text evidence="1">This b-type cytochrome is tightly associated with the reaction center of photosystem II (PSII). PSII is a light-driven water:plastoquinone oxidoreductase that uses light energy to abstract electrons from H(2)O, generating O(2) and a proton gradient subsequently used for ATP formation. It consists of a core antenna complex that captures photons, and an electron transfer chain that converts photonic excitation into a charge separation.</text>
</comment>
<comment type="cofactor">
    <cofactor evidence="1">
        <name>heme b</name>
        <dbReference type="ChEBI" id="CHEBI:60344"/>
    </cofactor>
    <text evidence="1">With its partner (PsbE) binds heme. PSII binds additional chlorophylls, carotenoids and specific lipids.</text>
</comment>
<comment type="subunit">
    <text evidence="1">Heterodimer of an alpha subunit and a beta subunit. PSII is composed of 1 copy each of membrane proteins PsbA, PsbB, PsbC, PsbD, PsbE, PsbF, PsbH, PsbI, PsbJ, PsbK, PsbL, PsbM, PsbT, PsbX, PsbY, PsbZ, Psb30/Ycf12, at least 3 peripheral proteins of the oxygen-evolving complex and a large number of cofactors. It forms dimeric complexes.</text>
</comment>
<comment type="subcellular location">
    <subcellularLocation>
        <location evidence="1">Plastid</location>
        <location evidence="1">Chloroplast thylakoid membrane</location>
        <topology evidence="1">Single-pass membrane protein</topology>
    </subcellularLocation>
</comment>
<comment type="similarity">
    <text evidence="1">Belongs to the PsbE/PsbF family.</text>
</comment>
<organism>
    <name type="scientific">Aristolochia macrophylla</name>
    <name type="common">Dutchman's pipe vine</name>
    <name type="synonym">Isotrema macrophyllum</name>
    <dbReference type="NCBI Taxonomy" id="12949"/>
    <lineage>
        <taxon>Eukaryota</taxon>
        <taxon>Viridiplantae</taxon>
        <taxon>Streptophyta</taxon>
        <taxon>Embryophyta</taxon>
        <taxon>Tracheophyta</taxon>
        <taxon>Spermatophyta</taxon>
        <taxon>Magnoliopsida</taxon>
        <taxon>Magnoliidae</taxon>
        <taxon>Piperales</taxon>
        <taxon>Aristolochiaceae</taxon>
        <taxon>Aristolochia</taxon>
    </lineage>
</organism>
<name>PSBF_ARIMA</name>
<geneLocation type="chloroplast"/>
<proteinExistence type="inferred from homology"/>
<protein>
    <recommendedName>
        <fullName evidence="1">Cytochrome b559 subunit beta</fullName>
    </recommendedName>
    <alternativeName>
        <fullName evidence="1">PSII reaction center subunit VI</fullName>
    </alternativeName>
</protein>
<gene>
    <name evidence="1" type="primary">psbF</name>
</gene>
<reference key="1">
    <citation type="submission" date="2002-07" db="EMBL/GenBank/DDBJ databases">
        <title>Parsing out signal and noise for seed-plant phylogenetic inference.</title>
        <authorList>
            <person name="Graham S.W."/>
            <person name="Rai H.S."/>
            <person name="Ikegami K."/>
            <person name="Reeves P.A."/>
            <person name="Olmstead R.G."/>
        </authorList>
    </citation>
    <scope>NUCLEOTIDE SEQUENCE [GENOMIC DNA]</scope>
</reference>
<keyword id="KW-0150">Chloroplast</keyword>
<keyword id="KW-0249">Electron transport</keyword>
<keyword id="KW-0349">Heme</keyword>
<keyword id="KW-0408">Iron</keyword>
<keyword id="KW-0472">Membrane</keyword>
<keyword id="KW-0479">Metal-binding</keyword>
<keyword id="KW-0602">Photosynthesis</keyword>
<keyword id="KW-0604">Photosystem II</keyword>
<keyword id="KW-0934">Plastid</keyword>
<keyword id="KW-0793">Thylakoid</keyword>
<keyword id="KW-0812">Transmembrane</keyword>
<keyword id="KW-1133">Transmembrane helix</keyword>
<keyword id="KW-0813">Transport</keyword>
<dbReference type="EMBL" id="AF528866">
    <property type="protein sequence ID" value="AAQ09264.1"/>
    <property type="molecule type" value="Genomic_DNA"/>
</dbReference>
<dbReference type="RefSeq" id="YP_009574932.1">
    <property type="nucleotide sequence ID" value="NC_041453.1"/>
</dbReference>
<dbReference type="SMR" id="Q6EYV9"/>
<dbReference type="GeneID" id="39698643"/>
<dbReference type="GO" id="GO:0009535">
    <property type="term" value="C:chloroplast thylakoid membrane"/>
    <property type="evidence" value="ECO:0007669"/>
    <property type="project" value="UniProtKB-SubCell"/>
</dbReference>
<dbReference type="GO" id="GO:0009539">
    <property type="term" value="C:photosystem II reaction center"/>
    <property type="evidence" value="ECO:0007669"/>
    <property type="project" value="InterPro"/>
</dbReference>
<dbReference type="GO" id="GO:0009055">
    <property type="term" value="F:electron transfer activity"/>
    <property type="evidence" value="ECO:0007669"/>
    <property type="project" value="UniProtKB-UniRule"/>
</dbReference>
<dbReference type="GO" id="GO:0020037">
    <property type="term" value="F:heme binding"/>
    <property type="evidence" value="ECO:0007669"/>
    <property type="project" value="InterPro"/>
</dbReference>
<dbReference type="GO" id="GO:0005506">
    <property type="term" value="F:iron ion binding"/>
    <property type="evidence" value="ECO:0007669"/>
    <property type="project" value="UniProtKB-UniRule"/>
</dbReference>
<dbReference type="GO" id="GO:0009767">
    <property type="term" value="P:photosynthetic electron transport chain"/>
    <property type="evidence" value="ECO:0007669"/>
    <property type="project" value="InterPro"/>
</dbReference>
<dbReference type="HAMAP" id="MF_00643">
    <property type="entry name" value="PSII_PsbF"/>
    <property type="match status" value="1"/>
</dbReference>
<dbReference type="InterPro" id="IPR006241">
    <property type="entry name" value="PSII_cyt_b559_bsu"/>
</dbReference>
<dbReference type="InterPro" id="IPR006216">
    <property type="entry name" value="PSII_cyt_b559_CS"/>
</dbReference>
<dbReference type="InterPro" id="IPR013081">
    <property type="entry name" value="PSII_cyt_b559_N"/>
</dbReference>
<dbReference type="NCBIfam" id="TIGR01333">
    <property type="entry name" value="cyt_b559_beta"/>
    <property type="match status" value="1"/>
</dbReference>
<dbReference type="Pfam" id="PF00283">
    <property type="entry name" value="Cytochrom_B559"/>
    <property type="match status" value="1"/>
</dbReference>
<dbReference type="PIRSF" id="PIRSF000037">
    <property type="entry name" value="PsbF"/>
    <property type="match status" value="1"/>
</dbReference>
<dbReference type="SUPFAM" id="SSF161045">
    <property type="entry name" value="Cytochrome b559 subunits"/>
    <property type="match status" value="1"/>
</dbReference>
<dbReference type="PROSITE" id="PS00537">
    <property type="entry name" value="CYTOCHROME_B559"/>
    <property type="match status" value="1"/>
</dbReference>
<evidence type="ECO:0000255" key="1">
    <source>
        <dbReference type="HAMAP-Rule" id="MF_00643"/>
    </source>
</evidence>